<feature type="chain" id="PRO_0000359846" description="Photosystem II CP47 reaction center protein">
    <location>
        <begin position="1"/>
        <end position="508"/>
    </location>
</feature>
<feature type="transmembrane region" description="Helical" evidence="1">
    <location>
        <begin position="21"/>
        <end position="36"/>
    </location>
</feature>
<feature type="transmembrane region" description="Helical" evidence="1">
    <location>
        <begin position="101"/>
        <end position="115"/>
    </location>
</feature>
<feature type="transmembrane region" description="Helical" evidence="1">
    <location>
        <begin position="140"/>
        <end position="156"/>
    </location>
</feature>
<feature type="transmembrane region" description="Helical" evidence="1">
    <location>
        <begin position="203"/>
        <end position="218"/>
    </location>
</feature>
<feature type="transmembrane region" description="Helical" evidence="1">
    <location>
        <begin position="237"/>
        <end position="252"/>
    </location>
</feature>
<feature type="transmembrane region" description="Helical" evidence="1">
    <location>
        <begin position="457"/>
        <end position="472"/>
    </location>
</feature>
<geneLocation type="chloroplast"/>
<gene>
    <name evidence="1" type="primary">psbB</name>
</gene>
<name>PSBB_NYMAL</name>
<accession>Q6EW26</accession>
<organism>
    <name type="scientific">Nymphaea alba</name>
    <name type="common">White water-lily</name>
    <name type="synonym">Castalia alba</name>
    <dbReference type="NCBI Taxonomy" id="34301"/>
    <lineage>
        <taxon>Eukaryota</taxon>
        <taxon>Viridiplantae</taxon>
        <taxon>Streptophyta</taxon>
        <taxon>Embryophyta</taxon>
        <taxon>Tracheophyta</taxon>
        <taxon>Spermatophyta</taxon>
        <taxon>Magnoliopsida</taxon>
        <taxon>Nymphaeales</taxon>
        <taxon>Nymphaeaceae</taxon>
        <taxon>Nymphaea</taxon>
    </lineage>
</organism>
<keyword id="KW-0148">Chlorophyll</keyword>
<keyword id="KW-0150">Chloroplast</keyword>
<keyword id="KW-0157">Chromophore</keyword>
<keyword id="KW-0472">Membrane</keyword>
<keyword id="KW-0602">Photosynthesis</keyword>
<keyword id="KW-0604">Photosystem II</keyword>
<keyword id="KW-0934">Plastid</keyword>
<keyword id="KW-0793">Thylakoid</keyword>
<keyword id="KW-0812">Transmembrane</keyword>
<keyword id="KW-1133">Transmembrane helix</keyword>
<dbReference type="EMBL" id="AJ627251">
    <property type="protein sequence ID" value="CAF28620.1"/>
    <property type="molecule type" value="Genomic_DNA"/>
</dbReference>
<dbReference type="RefSeq" id="YP_053180.1">
    <property type="nucleotide sequence ID" value="NC_006050.1"/>
</dbReference>
<dbReference type="SMR" id="Q6EW26"/>
<dbReference type="GeneID" id="2896141"/>
<dbReference type="GO" id="GO:0009535">
    <property type="term" value="C:chloroplast thylakoid membrane"/>
    <property type="evidence" value="ECO:0007669"/>
    <property type="project" value="UniProtKB-SubCell"/>
</dbReference>
<dbReference type="GO" id="GO:0009523">
    <property type="term" value="C:photosystem II"/>
    <property type="evidence" value="ECO:0007669"/>
    <property type="project" value="UniProtKB-KW"/>
</dbReference>
<dbReference type="GO" id="GO:0016168">
    <property type="term" value="F:chlorophyll binding"/>
    <property type="evidence" value="ECO:0007669"/>
    <property type="project" value="UniProtKB-UniRule"/>
</dbReference>
<dbReference type="GO" id="GO:0045156">
    <property type="term" value="F:electron transporter, transferring electrons within the cyclic electron transport pathway of photosynthesis activity"/>
    <property type="evidence" value="ECO:0007669"/>
    <property type="project" value="InterPro"/>
</dbReference>
<dbReference type="GO" id="GO:0009772">
    <property type="term" value="P:photosynthetic electron transport in photosystem II"/>
    <property type="evidence" value="ECO:0007669"/>
    <property type="project" value="InterPro"/>
</dbReference>
<dbReference type="FunFam" id="3.10.680.10:FF:000001">
    <property type="entry name" value="Photosystem II CP47 reaction center protein"/>
    <property type="match status" value="1"/>
</dbReference>
<dbReference type="Gene3D" id="3.10.680.10">
    <property type="entry name" value="Photosystem II CP47 reaction center protein"/>
    <property type="match status" value="1"/>
</dbReference>
<dbReference type="HAMAP" id="MF_01495">
    <property type="entry name" value="PSII_PsbB_CP47"/>
    <property type="match status" value="1"/>
</dbReference>
<dbReference type="InterPro" id="IPR000932">
    <property type="entry name" value="PS_antenna-like"/>
</dbReference>
<dbReference type="InterPro" id="IPR036001">
    <property type="entry name" value="PS_II_antenna-like_sf"/>
</dbReference>
<dbReference type="InterPro" id="IPR017486">
    <property type="entry name" value="PSII_PsbB"/>
</dbReference>
<dbReference type="NCBIfam" id="TIGR03039">
    <property type="entry name" value="PS_II_CP47"/>
    <property type="match status" value="1"/>
</dbReference>
<dbReference type="PANTHER" id="PTHR33180">
    <property type="entry name" value="PHOTOSYSTEM II CP43 REACTION CENTER PROTEIN"/>
    <property type="match status" value="1"/>
</dbReference>
<dbReference type="PANTHER" id="PTHR33180:SF37">
    <property type="entry name" value="PHOTOSYSTEM II CP43 REACTION CENTER PROTEIN"/>
    <property type="match status" value="1"/>
</dbReference>
<dbReference type="Pfam" id="PF00421">
    <property type="entry name" value="PSII"/>
    <property type="match status" value="1"/>
</dbReference>
<dbReference type="SUPFAM" id="SSF161077">
    <property type="entry name" value="Photosystem II antenna protein-like"/>
    <property type="match status" value="1"/>
</dbReference>
<reference key="1">
    <citation type="journal article" date="2004" name="Mol. Biol. Evol.">
        <title>The chloroplast genome of Nymphaea alba: whole-genome analyses and the problem of identifying the most basal angiosperm.</title>
        <authorList>
            <person name="Goremykin V.V."/>
            <person name="Hirsch-Ernst K.I."/>
            <person name="Woelfl S."/>
            <person name="Hellwig F.H."/>
        </authorList>
    </citation>
    <scope>NUCLEOTIDE SEQUENCE [LARGE SCALE GENOMIC DNA]</scope>
</reference>
<comment type="function">
    <text evidence="1">One of the components of the core complex of photosystem II (PSII). It binds chlorophyll and helps catalyze the primary light-induced photochemical processes of PSII. PSII is a light-driven water:plastoquinone oxidoreductase, using light energy to abstract electrons from H(2)O, generating O(2) and a proton gradient subsequently used for ATP formation.</text>
</comment>
<comment type="cofactor">
    <text evidence="1">Binds multiple chlorophylls. PSII binds additional chlorophylls, carotenoids and specific lipids.</text>
</comment>
<comment type="subunit">
    <text evidence="1">PSII is composed of 1 copy each of membrane proteins PsbA, PsbB, PsbC, PsbD, PsbE, PsbF, PsbH, PsbI, PsbJ, PsbK, PsbL, PsbM, PsbT, PsbX, PsbY, PsbZ, Psb30/Ycf12, at least 3 peripheral proteins of the oxygen-evolving complex and a large number of cofactors. It forms dimeric complexes.</text>
</comment>
<comment type="subcellular location">
    <subcellularLocation>
        <location evidence="1">Plastid</location>
        <location evidence="1">Chloroplast thylakoid membrane</location>
        <topology evidence="1">Multi-pass membrane protein</topology>
    </subcellularLocation>
</comment>
<comment type="similarity">
    <text evidence="1">Belongs to the PsbB/PsbC family. PsbB subfamily.</text>
</comment>
<evidence type="ECO:0000255" key="1">
    <source>
        <dbReference type="HAMAP-Rule" id="MF_01495"/>
    </source>
</evidence>
<protein>
    <recommendedName>
        <fullName evidence="1">Photosystem II CP47 reaction center protein</fullName>
    </recommendedName>
    <alternativeName>
        <fullName evidence="1">PSII 47 kDa protein</fullName>
    </alternativeName>
    <alternativeName>
        <fullName evidence="1">Protein CP-47</fullName>
    </alternativeName>
</protein>
<sequence length="508" mass="56126">MGLPWYRVHTVVLNDPGRLLSVHIMHTALVSGWAGSMALYELAVFDPSDPVLDPMWRQGMFVIPFMTRLGITNSWGGWSITGGTVTNPGIWSYEGVAGAHIVFSGLCFLAAIWHWVYWDLEIFCDERTGKPSLDLPKIFGIHLFLSGVACFGFGAFHVTGLYGPGIWVSDPYGLTGKVQPVNPSWGAEGFDPFVPGGIASHHIAAGTLGILAGLFHLSVRPPQRLYKALRMGNIETVLSSSIAAVFFAAFVVAGTMWYGSATTPIELFGPTRYQWDQGYFQQEIYRRVNAGLAENLSLSESWSKIPDKLAFYDYIGNNPAKGGLFRAGSMDNGDGIAVGWLGHPVFRDKEGHELFVRRMPTFFETFPVVLVDGDGIVRADVPFRRAESKYSVEQVGVTVEFYGGELDGVSYNDPATVKKYARRAQLGEIFELDRATLKSDGVFRSSPRGWFTFGHASFALLFFFGHIWHGARTLFRDVFAGIDPDLDAQVEFGAFQKLGDPTTRRQVV</sequence>
<proteinExistence type="inferred from homology"/>